<protein>
    <recommendedName>
        <fullName evidence="1">Phospho-N-acetylmuramoyl-pentapeptide-transferase</fullName>
        <ecNumber evidence="1">2.7.8.13</ecNumber>
    </recommendedName>
    <alternativeName>
        <fullName evidence="1">UDP-MurNAc-pentapeptide phosphotransferase</fullName>
    </alternativeName>
</protein>
<sequence>MLERVLLLTLILSFVITVILSPIFIPFLRRLKFGQSIREEGPKSHQKKSGTPTMGGLMILLSILVSSLFVSFQLSIFSMDVLLLLLVTIGFGVLGFIDDFIKVVMKRNLGLTSKQKLIGQLVVAVLFYLGLRNMGLSTEVTIPATSLSIDFGWFYLPLVIVMLVGASNAVNLTDGLDGLVAGTGAIAFGAFAIIAWATNYFEVAIFSAAVVGAVLGFLVFNSHPAKVFMGDTGSLALGGAIAAIAIMAKQEILLIIIGGVFVIETLSVIIQVISFKTRGKRIFKMSPLHHHYELSGWSEWRVVVTFWTVGLLFAMLAIYLEVWIT</sequence>
<evidence type="ECO:0000255" key="1">
    <source>
        <dbReference type="HAMAP-Rule" id="MF_00038"/>
    </source>
</evidence>
<evidence type="ECO:0000305" key="2"/>
<comment type="function">
    <text evidence="1">Catalyzes the initial step of the lipid cycle reactions in the biosynthesis of the cell wall peptidoglycan: transfers peptidoglycan precursor phospho-MurNAc-pentapeptide from UDP-MurNAc-pentapeptide onto the lipid carrier undecaprenyl phosphate, yielding undecaprenyl-pyrophosphoryl-MurNAc-pentapeptide, known as lipid I.</text>
</comment>
<comment type="catalytic activity">
    <reaction evidence="1">
        <text>UDP-N-acetyl-alpha-D-muramoyl-L-alanyl-gamma-D-glutamyl-meso-2,6-diaminopimeloyl-D-alanyl-D-alanine + di-trans,octa-cis-undecaprenyl phosphate = di-trans,octa-cis-undecaprenyl diphospho-N-acetyl-alpha-D-muramoyl-L-alanyl-D-glutamyl-meso-2,6-diaminopimeloyl-D-alanyl-D-alanine + UMP</text>
        <dbReference type="Rhea" id="RHEA:28386"/>
        <dbReference type="ChEBI" id="CHEBI:57865"/>
        <dbReference type="ChEBI" id="CHEBI:60392"/>
        <dbReference type="ChEBI" id="CHEBI:61386"/>
        <dbReference type="ChEBI" id="CHEBI:61387"/>
        <dbReference type="EC" id="2.7.8.13"/>
    </reaction>
</comment>
<comment type="cofactor">
    <cofactor evidence="1">
        <name>Mg(2+)</name>
        <dbReference type="ChEBI" id="CHEBI:18420"/>
    </cofactor>
</comment>
<comment type="pathway">
    <text evidence="1">Cell wall biogenesis; peptidoglycan biosynthesis.</text>
</comment>
<comment type="subcellular location">
    <subcellularLocation>
        <location evidence="1">Cell membrane</location>
        <topology evidence="1">Multi-pass membrane protein</topology>
    </subcellularLocation>
</comment>
<comment type="similarity">
    <text evidence="1">Belongs to the glycosyltransferase 4 family. MraY subfamily.</text>
</comment>
<comment type="sequence caution" evidence="2">
    <conflict type="frameshift">
        <sequence resource="EMBL-CDS" id="BAB06288"/>
    </conflict>
    <text>Produces two separate ORFs.</text>
</comment>
<name>MRAY_HALH5</name>
<gene>
    <name evidence="1" type="primary">mraY</name>
    <name type="ordered locus">BH2568/BH2569</name>
</gene>
<reference key="1">
    <citation type="journal article" date="2000" name="Nucleic Acids Res.">
        <title>Complete genome sequence of the alkaliphilic bacterium Bacillus halodurans and genomic sequence comparison with Bacillus subtilis.</title>
        <authorList>
            <person name="Takami H."/>
            <person name="Nakasone K."/>
            <person name="Takaki Y."/>
            <person name="Maeno G."/>
            <person name="Sasaki R."/>
            <person name="Masui N."/>
            <person name="Fuji F."/>
            <person name="Hirama C."/>
            <person name="Nakamura Y."/>
            <person name="Ogasawara N."/>
            <person name="Kuhara S."/>
            <person name="Horikoshi K."/>
        </authorList>
    </citation>
    <scope>NUCLEOTIDE SEQUENCE [LARGE SCALE GENOMIC DNA]</scope>
    <source>
        <strain>ATCC BAA-125 / DSM 18197 / FERM 7344 / JCM 9153 / C-125</strain>
    </source>
</reference>
<keyword id="KW-0131">Cell cycle</keyword>
<keyword id="KW-0132">Cell division</keyword>
<keyword id="KW-1003">Cell membrane</keyword>
<keyword id="KW-0133">Cell shape</keyword>
<keyword id="KW-0961">Cell wall biogenesis/degradation</keyword>
<keyword id="KW-0460">Magnesium</keyword>
<keyword id="KW-0472">Membrane</keyword>
<keyword id="KW-0479">Metal-binding</keyword>
<keyword id="KW-0573">Peptidoglycan synthesis</keyword>
<keyword id="KW-1185">Reference proteome</keyword>
<keyword id="KW-0808">Transferase</keyword>
<keyword id="KW-0812">Transmembrane</keyword>
<keyword id="KW-1133">Transmembrane helix</keyword>
<feature type="chain" id="PRO_0000108779" description="Phospho-N-acetylmuramoyl-pentapeptide-transferase">
    <location>
        <begin position="1"/>
        <end position="325"/>
    </location>
</feature>
<feature type="transmembrane region" description="Helical" evidence="1">
    <location>
        <begin position="5"/>
        <end position="25"/>
    </location>
</feature>
<feature type="transmembrane region" description="Helical" evidence="1">
    <location>
        <begin position="57"/>
        <end position="77"/>
    </location>
</feature>
<feature type="transmembrane region" description="Helical" evidence="1">
    <location>
        <begin position="81"/>
        <end position="101"/>
    </location>
</feature>
<feature type="transmembrane region" description="Helical" evidence="1">
    <location>
        <begin position="117"/>
        <end position="137"/>
    </location>
</feature>
<feature type="transmembrane region" description="Helical" evidence="1">
    <location>
        <begin position="146"/>
        <end position="166"/>
    </location>
</feature>
<feature type="transmembrane region" description="Helical" evidence="1">
    <location>
        <begin position="178"/>
        <end position="198"/>
    </location>
</feature>
<feature type="transmembrane region" description="Helical" evidence="1">
    <location>
        <begin position="200"/>
        <end position="220"/>
    </location>
</feature>
<feature type="transmembrane region" description="Helical" evidence="1">
    <location>
        <begin position="227"/>
        <end position="247"/>
    </location>
</feature>
<feature type="transmembrane region" description="Helical" evidence="1">
    <location>
        <begin position="252"/>
        <end position="272"/>
    </location>
</feature>
<feature type="transmembrane region" description="Helical" evidence="1">
    <location>
        <begin position="304"/>
        <end position="324"/>
    </location>
</feature>
<accession>Q9K9S6</accession>
<accession>Q9K9S7</accession>
<organism>
    <name type="scientific">Halalkalibacterium halodurans (strain ATCC BAA-125 / DSM 18197 / FERM 7344 / JCM 9153 / C-125)</name>
    <name type="common">Bacillus halodurans</name>
    <dbReference type="NCBI Taxonomy" id="272558"/>
    <lineage>
        <taxon>Bacteria</taxon>
        <taxon>Bacillati</taxon>
        <taxon>Bacillota</taxon>
        <taxon>Bacilli</taxon>
        <taxon>Bacillales</taxon>
        <taxon>Bacillaceae</taxon>
        <taxon>Halalkalibacterium (ex Joshi et al. 2022)</taxon>
    </lineage>
</organism>
<proteinExistence type="inferred from homology"/>
<dbReference type="EC" id="2.7.8.13" evidence="1"/>
<dbReference type="EMBL" id="BA000004">
    <property type="protein sequence ID" value="BAB06287.1"/>
    <property type="status" value="ALT_FRAME"/>
    <property type="molecule type" value="Genomic_DNA"/>
</dbReference>
<dbReference type="EMBL" id="BA000004">
    <property type="protein sequence ID" value="BAB06288.1"/>
    <property type="status" value="ALT_FRAME"/>
    <property type="molecule type" value="Genomic_DNA"/>
</dbReference>
<dbReference type="PIR" id="A83971">
    <property type="entry name" value="A83971"/>
</dbReference>
<dbReference type="PIR" id="H83970">
    <property type="entry name" value="H83970"/>
</dbReference>
<dbReference type="SMR" id="Q9K9S6"/>
<dbReference type="STRING" id="272558.gene:10728466"/>
<dbReference type="KEGG" id="bha:BH2568"/>
<dbReference type="KEGG" id="bha:BH2569"/>
<dbReference type="eggNOG" id="COG0472">
    <property type="taxonomic scope" value="Bacteria"/>
</dbReference>
<dbReference type="HOGENOM" id="CLU_023982_0_1_9"/>
<dbReference type="UniPathway" id="UPA00219"/>
<dbReference type="Proteomes" id="UP000001258">
    <property type="component" value="Chromosome"/>
</dbReference>
<dbReference type="GO" id="GO:0005886">
    <property type="term" value="C:plasma membrane"/>
    <property type="evidence" value="ECO:0007669"/>
    <property type="project" value="UniProtKB-SubCell"/>
</dbReference>
<dbReference type="GO" id="GO:0046872">
    <property type="term" value="F:metal ion binding"/>
    <property type="evidence" value="ECO:0007669"/>
    <property type="project" value="UniProtKB-KW"/>
</dbReference>
<dbReference type="GO" id="GO:0008963">
    <property type="term" value="F:phospho-N-acetylmuramoyl-pentapeptide-transferase activity"/>
    <property type="evidence" value="ECO:0007669"/>
    <property type="project" value="UniProtKB-UniRule"/>
</dbReference>
<dbReference type="GO" id="GO:0051992">
    <property type="term" value="F:UDP-N-acetylmuramoyl-L-alanyl-D-glutamyl-meso-2,6-diaminopimelyl-D-alanyl-D-alanine:undecaprenyl-phosphate transferase activity"/>
    <property type="evidence" value="ECO:0007669"/>
    <property type="project" value="RHEA"/>
</dbReference>
<dbReference type="GO" id="GO:0051301">
    <property type="term" value="P:cell division"/>
    <property type="evidence" value="ECO:0007669"/>
    <property type="project" value="UniProtKB-KW"/>
</dbReference>
<dbReference type="GO" id="GO:0071555">
    <property type="term" value="P:cell wall organization"/>
    <property type="evidence" value="ECO:0007669"/>
    <property type="project" value="UniProtKB-KW"/>
</dbReference>
<dbReference type="GO" id="GO:0009252">
    <property type="term" value="P:peptidoglycan biosynthetic process"/>
    <property type="evidence" value="ECO:0007669"/>
    <property type="project" value="UniProtKB-UniRule"/>
</dbReference>
<dbReference type="GO" id="GO:0008360">
    <property type="term" value="P:regulation of cell shape"/>
    <property type="evidence" value="ECO:0007669"/>
    <property type="project" value="UniProtKB-KW"/>
</dbReference>
<dbReference type="CDD" id="cd06852">
    <property type="entry name" value="GT_MraY"/>
    <property type="match status" value="1"/>
</dbReference>
<dbReference type="HAMAP" id="MF_00038">
    <property type="entry name" value="MraY"/>
    <property type="match status" value="1"/>
</dbReference>
<dbReference type="InterPro" id="IPR000715">
    <property type="entry name" value="Glycosyl_transferase_4"/>
</dbReference>
<dbReference type="InterPro" id="IPR003524">
    <property type="entry name" value="PNAcMuramoyl-5peptid_Trfase"/>
</dbReference>
<dbReference type="InterPro" id="IPR018480">
    <property type="entry name" value="PNAcMuramoyl-5peptid_Trfase_CS"/>
</dbReference>
<dbReference type="NCBIfam" id="TIGR00445">
    <property type="entry name" value="mraY"/>
    <property type="match status" value="1"/>
</dbReference>
<dbReference type="PANTHER" id="PTHR22926">
    <property type="entry name" value="PHOSPHO-N-ACETYLMURAMOYL-PENTAPEPTIDE-TRANSFERASE"/>
    <property type="match status" value="1"/>
</dbReference>
<dbReference type="PANTHER" id="PTHR22926:SF5">
    <property type="entry name" value="PHOSPHO-N-ACETYLMURAMOYL-PENTAPEPTIDE-TRANSFERASE HOMOLOG"/>
    <property type="match status" value="1"/>
</dbReference>
<dbReference type="Pfam" id="PF00953">
    <property type="entry name" value="Glycos_transf_4"/>
    <property type="match status" value="1"/>
</dbReference>
<dbReference type="Pfam" id="PF10555">
    <property type="entry name" value="MraY_sig1"/>
    <property type="match status" value="1"/>
</dbReference>
<dbReference type="PROSITE" id="PS01347">
    <property type="entry name" value="MRAY_1"/>
    <property type="match status" value="1"/>
</dbReference>
<dbReference type="PROSITE" id="PS01348">
    <property type="entry name" value="MRAY_2"/>
    <property type="match status" value="1"/>
</dbReference>